<accession>B0Y9F9</accession>
<sequence length="324" mass="34558">MYLPSLVLGLLGFGLTASTSPIEERSNRSKAPAGCLTVGSSGTYATIGAALSALGSSTSDACIFIGAGTYQEQITIDYKGKLTMYGETTDTSSYKQNLVTITHSISSPEAGSLDKSATVNVRSDGFKMYNINVINGYGKGAQAVTLVANADKLGFYGCSFVGYQDTLYAKAGRQYYSNCYIEGAVDYIFGDASAWFGECDLVSVGPGYITAMSRTTADETTWYAIDHCNIYGKPGVDLTSAVYLGRPWRVLARVIFQNSQLSNIINPKGWSPMATGATPLYYEYNNKGAGADTSKREYESPISGAVSIATVLGGGWNSWVDTTY</sequence>
<comment type="function">
    <text evidence="1">Involved in maceration and soft-rotting of plant tissue.</text>
</comment>
<comment type="catalytic activity">
    <reaction>
        <text>[(1-&gt;4)-alpha-D-galacturonosyl methyl ester](n) + n H2O = [(1-&gt;4)-alpha-D-galacturonosyl](n) + n methanol + n H(+)</text>
        <dbReference type="Rhea" id="RHEA:22380"/>
        <dbReference type="Rhea" id="RHEA-COMP:14570"/>
        <dbReference type="Rhea" id="RHEA-COMP:14573"/>
        <dbReference type="ChEBI" id="CHEBI:15377"/>
        <dbReference type="ChEBI" id="CHEBI:15378"/>
        <dbReference type="ChEBI" id="CHEBI:17790"/>
        <dbReference type="ChEBI" id="CHEBI:140522"/>
        <dbReference type="ChEBI" id="CHEBI:140523"/>
        <dbReference type="EC" id="3.1.1.11"/>
    </reaction>
</comment>
<comment type="pathway">
    <text>Glycan metabolism; pectin degradation; 2-dehydro-3-deoxy-D-gluconate from pectin: step 1/5.</text>
</comment>
<comment type="subcellular location">
    <subcellularLocation>
        <location evidence="1">Secreted</location>
    </subcellularLocation>
</comment>
<comment type="similarity">
    <text evidence="4">Belongs to the pectinesterase family.</text>
</comment>
<reference key="1">
    <citation type="journal article" date="2008" name="PLoS Genet.">
        <title>Genomic islands in the pathogenic filamentous fungus Aspergillus fumigatus.</title>
        <authorList>
            <person name="Fedorova N.D."/>
            <person name="Khaldi N."/>
            <person name="Joardar V.S."/>
            <person name="Maiti R."/>
            <person name="Amedeo P."/>
            <person name="Anderson M.J."/>
            <person name="Crabtree J."/>
            <person name="Silva J.C."/>
            <person name="Badger J.H."/>
            <person name="Albarraq A."/>
            <person name="Angiuoli S."/>
            <person name="Bussey H."/>
            <person name="Bowyer P."/>
            <person name="Cotty P.J."/>
            <person name="Dyer P.S."/>
            <person name="Egan A."/>
            <person name="Galens K."/>
            <person name="Fraser-Liggett C.M."/>
            <person name="Haas B.J."/>
            <person name="Inman J.M."/>
            <person name="Kent R."/>
            <person name="Lemieux S."/>
            <person name="Malavazi I."/>
            <person name="Orvis J."/>
            <person name="Roemer T."/>
            <person name="Ronning C.M."/>
            <person name="Sundaram J.P."/>
            <person name="Sutton G."/>
            <person name="Turner G."/>
            <person name="Venter J.C."/>
            <person name="White O.R."/>
            <person name="Whitty B.R."/>
            <person name="Youngman P."/>
            <person name="Wolfe K.H."/>
            <person name="Goldman G.H."/>
            <person name="Wortman J.R."/>
            <person name="Jiang B."/>
            <person name="Denning D.W."/>
            <person name="Nierman W.C."/>
        </authorList>
    </citation>
    <scope>NUCLEOTIDE SEQUENCE [LARGE SCALE GENOMIC DNA]</scope>
    <source>
        <strain>CBS 144.89 / FGSC A1163 / CEA10</strain>
    </source>
</reference>
<name>PMEA_ASPFC</name>
<dbReference type="EC" id="3.1.1.11"/>
<dbReference type="EMBL" id="DS499600">
    <property type="protein sequence ID" value="EDP48652.1"/>
    <property type="molecule type" value="Genomic_DNA"/>
</dbReference>
<dbReference type="SMR" id="B0Y9F9"/>
<dbReference type="GlyCosmos" id="B0Y9F9">
    <property type="glycosylation" value="1 site, No reported glycans"/>
</dbReference>
<dbReference type="EnsemblFungi" id="EDP48652">
    <property type="protein sequence ID" value="EDP48652"/>
    <property type="gene ID" value="AFUB_080890"/>
</dbReference>
<dbReference type="VEuPathDB" id="FungiDB:AFUB_080890"/>
<dbReference type="HOGENOM" id="CLU_012243_1_2_1"/>
<dbReference type="OrthoDB" id="42622at5052"/>
<dbReference type="PhylomeDB" id="B0Y9F9"/>
<dbReference type="UniPathway" id="UPA00545">
    <property type="reaction ID" value="UER00823"/>
</dbReference>
<dbReference type="Proteomes" id="UP000001699">
    <property type="component" value="Unassembled WGS sequence"/>
</dbReference>
<dbReference type="GO" id="GO:0005576">
    <property type="term" value="C:extracellular region"/>
    <property type="evidence" value="ECO:0007669"/>
    <property type="project" value="UniProtKB-SubCell"/>
</dbReference>
<dbReference type="GO" id="GO:0030599">
    <property type="term" value="F:pectinesterase activity"/>
    <property type="evidence" value="ECO:0007669"/>
    <property type="project" value="UniProtKB-EC"/>
</dbReference>
<dbReference type="GO" id="GO:0042545">
    <property type="term" value="P:cell wall modification"/>
    <property type="evidence" value="ECO:0007669"/>
    <property type="project" value="InterPro"/>
</dbReference>
<dbReference type="GO" id="GO:0045490">
    <property type="term" value="P:pectin catabolic process"/>
    <property type="evidence" value="ECO:0007669"/>
    <property type="project" value="UniProtKB-UniPathway"/>
</dbReference>
<dbReference type="FunFam" id="2.160.20.10:FF:000014">
    <property type="entry name" value="Pectinesterase"/>
    <property type="match status" value="1"/>
</dbReference>
<dbReference type="Gene3D" id="2.160.20.10">
    <property type="entry name" value="Single-stranded right-handed beta-helix, Pectin lyase-like"/>
    <property type="match status" value="1"/>
</dbReference>
<dbReference type="InterPro" id="IPR012334">
    <property type="entry name" value="Pectin_lyas_fold"/>
</dbReference>
<dbReference type="InterPro" id="IPR011050">
    <property type="entry name" value="Pectin_lyase_fold/virulence"/>
</dbReference>
<dbReference type="InterPro" id="IPR033131">
    <property type="entry name" value="Pectinesterase_Asp_AS"/>
</dbReference>
<dbReference type="InterPro" id="IPR000070">
    <property type="entry name" value="Pectinesterase_cat"/>
</dbReference>
<dbReference type="PANTHER" id="PTHR31321">
    <property type="entry name" value="ACYL-COA THIOESTER HYDROLASE YBHC-RELATED"/>
    <property type="match status" value="1"/>
</dbReference>
<dbReference type="PANTHER" id="PTHR31321:SF57">
    <property type="entry name" value="PECTINESTERASE 53-RELATED"/>
    <property type="match status" value="1"/>
</dbReference>
<dbReference type="Pfam" id="PF01095">
    <property type="entry name" value="Pectinesterase"/>
    <property type="match status" value="1"/>
</dbReference>
<dbReference type="SUPFAM" id="SSF51126">
    <property type="entry name" value="Pectin lyase-like"/>
    <property type="match status" value="1"/>
</dbReference>
<dbReference type="PROSITE" id="PS00503">
    <property type="entry name" value="PECTINESTERASE_2"/>
    <property type="match status" value="1"/>
</dbReference>
<evidence type="ECO:0000250" key="1"/>
<evidence type="ECO:0000255" key="2"/>
<evidence type="ECO:0000255" key="3">
    <source>
        <dbReference type="PROSITE-ProRule" id="PRU10040"/>
    </source>
</evidence>
<evidence type="ECO:0000305" key="4"/>
<gene>
    <name type="primary">pmeA</name>
    <name type="ORF">AFUB_080890</name>
</gene>
<organism>
    <name type="scientific">Aspergillus fumigatus (strain CBS 144.89 / FGSC A1163 / CEA10)</name>
    <name type="common">Neosartorya fumigata</name>
    <dbReference type="NCBI Taxonomy" id="451804"/>
    <lineage>
        <taxon>Eukaryota</taxon>
        <taxon>Fungi</taxon>
        <taxon>Dikarya</taxon>
        <taxon>Ascomycota</taxon>
        <taxon>Pezizomycotina</taxon>
        <taxon>Eurotiomycetes</taxon>
        <taxon>Eurotiomycetidae</taxon>
        <taxon>Eurotiales</taxon>
        <taxon>Aspergillaceae</taxon>
        <taxon>Aspergillus</taxon>
        <taxon>Aspergillus subgen. Fumigati</taxon>
    </lineage>
</organism>
<keyword id="KW-0063">Aspartyl esterase</keyword>
<keyword id="KW-0961">Cell wall biogenesis/degradation</keyword>
<keyword id="KW-0325">Glycoprotein</keyword>
<keyword id="KW-0378">Hydrolase</keyword>
<keyword id="KW-0964">Secreted</keyword>
<keyword id="KW-0732">Signal</keyword>
<proteinExistence type="inferred from homology"/>
<protein>
    <recommendedName>
        <fullName>Probable pectinesterase A</fullName>
        <ecNumber>3.1.1.11</ecNumber>
    </recommendedName>
    <alternativeName>
        <fullName>Pectin methylesterase A</fullName>
    </alternativeName>
</protein>
<feature type="signal peptide" evidence="2">
    <location>
        <begin position="1"/>
        <end position="19"/>
    </location>
</feature>
<feature type="chain" id="PRO_0000394079" description="Probable pectinesterase A">
    <location>
        <begin position="20"/>
        <end position="324"/>
    </location>
</feature>
<feature type="active site" description="Proton donor" evidence="3">
    <location>
        <position position="165"/>
    </location>
</feature>
<feature type="active site" description="Nucleophile" evidence="3">
    <location>
        <position position="186"/>
    </location>
</feature>
<feature type="binding site" evidence="1">
    <location>
        <position position="142"/>
    </location>
    <ligand>
        <name>substrate</name>
    </ligand>
</feature>
<feature type="binding site" evidence="1">
    <location>
        <position position="246"/>
    </location>
    <ligand>
        <name>substrate</name>
    </ligand>
</feature>
<feature type="binding site" evidence="1">
    <location>
        <position position="248"/>
    </location>
    <ligand>
        <name>substrate</name>
    </ligand>
</feature>
<feature type="site" description="Transition state stabilizer" evidence="1">
    <location>
        <position position="164"/>
    </location>
</feature>
<feature type="glycosylation site" description="N-linked (GlcNAc...) asparagine" evidence="2">
    <location>
        <position position="27"/>
    </location>
</feature>